<keyword id="KW-0067">ATP-binding</keyword>
<keyword id="KW-0347">Helicase</keyword>
<keyword id="KW-0378">Hydrolase</keyword>
<keyword id="KW-0547">Nucleotide-binding</keyword>
<keyword id="KW-1185">Reference proteome</keyword>
<keyword id="KW-0694">RNA-binding</keyword>
<keyword id="KW-0804">Transcription</keyword>
<keyword id="KW-0805">Transcription regulation</keyword>
<keyword id="KW-0806">Transcription termination</keyword>
<evidence type="ECO:0000255" key="1">
    <source>
        <dbReference type="HAMAP-Rule" id="MF_01884"/>
    </source>
</evidence>
<evidence type="ECO:0000255" key="2">
    <source>
        <dbReference type="PROSITE-ProRule" id="PRU01203"/>
    </source>
</evidence>
<evidence type="ECO:0000305" key="3"/>
<organism>
    <name type="scientific">Bacillus subtilis (strain 168)</name>
    <dbReference type="NCBI Taxonomy" id="224308"/>
    <lineage>
        <taxon>Bacteria</taxon>
        <taxon>Bacillati</taxon>
        <taxon>Bacillota</taxon>
        <taxon>Bacilli</taxon>
        <taxon>Bacillales</taxon>
        <taxon>Bacillaceae</taxon>
        <taxon>Bacillus</taxon>
    </lineage>
</organism>
<sequence>MKDVSISSLENMKLKELYELARHYKISYYSKLTKKELIFAILKANAEQEDLLFMEGVLEIIQSEGFGFLRPINYSPSSEDIYISASQIRRFDLRNGDKVSGKVRPPKENERYYGLLHVEAVNGDDPESAKERVHFPALTPLYPDRQMVLETKPNFLSTRIMDMMAPVGFGQRGLIVAPPKAGKTMLLKEIANSITANQPEAELIVLLIDERPEEVTDIERSVAGDVVSSTFDEVPENHIKVAELVLERAMRLVEHKKDVIILMDSITRLARAYNLVIPPSGRTLSGGIDPAAFHRPKRFFGAARNIEEGGSLTILATALVDTGSRMDDVIYEEFKGTGNMELHLDRSLAERRIFPAIDIRRSGTRKEELLVPKEHLDRLWSIRKTMSDSPDFAEKFMRKMKKTKTNQEFFDILNQEWKQANLSSARR</sequence>
<reference key="1">
    <citation type="journal article" date="1993" name="J. Bacteriol.">
        <title>Identification of a putative Bacillus subtilis rho gene.</title>
        <authorList>
            <person name="Quirk P.G."/>
            <person name="Dunkley E.A. Jr."/>
            <person name="Lee P."/>
            <person name="Krulwich T.A."/>
        </authorList>
    </citation>
    <scope>NUCLEOTIDE SEQUENCE [GENOMIC DNA]</scope>
    <source>
        <strain>BD99 / MS119</strain>
    </source>
</reference>
<reference key="2">
    <citation type="journal article" date="1997" name="Microbiology">
        <title>The Bacillus subtilis genome from gerBC (311 degrees) to licR (334 degrees).</title>
        <authorList>
            <person name="Presecan E."/>
            <person name="Moszer I."/>
            <person name="Boursier L."/>
            <person name="Cruz Ramos H."/>
            <person name="De La Fuente V."/>
            <person name="Hullo M.-F."/>
            <person name="Lelong C."/>
            <person name="Schleich S."/>
            <person name="Sekowska A."/>
            <person name="Song B.H."/>
            <person name="Villani G."/>
            <person name="Kunst F."/>
            <person name="Danchin A."/>
            <person name="Glaser P."/>
        </authorList>
    </citation>
    <scope>NUCLEOTIDE SEQUENCE [GENOMIC DNA]</scope>
    <source>
        <strain>168</strain>
    </source>
</reference>
<reference key="3">
    <citation type="journal article" date="1997" name="Nature">
        <title>The complete genome sequence of the Gram-positive bacterium Bacillus subtilis.</title>
        <authorList>
            <person name="Kunst F."/>
            <person name="Ogasawara N."/>
            <person name="Moszer I."/>
            <person name="Albertini A.M."/>
            <person name="Alloni G."/>
            <person name="Azevedo V."/>
            <person name="Bertero M.G."/>
            <person name="Bessieres P."/>
            <person name="Bolotin A."/>
            <person name="Borchert S."/>
            <person name="Borriss R."/>
            <person name="Boursier L."/>
            <person name="Brans A."/>
            <person name="Braun M."/>
            <person name="Brignell S.C."/>
            <person name="Bron S."/>
            <person name="Brouillet S."/>
            <person name="Bruschi C.V."/>
            <person name="Caldwell B."/>
            <person name="Capuano V."/>
            <person name="Carter N.M."/>
            <person name="Choi S.-K."/>
            <person name="Codani J.-J."/>
            <person name="Connerton I.F."/>
            <person name="Cummings N.J."/>
            <person name="Daniel R.A."/>
            <person name="Denizot F."/>
            <person name="Devine K.M."/>
            <person name="Duesterhoeft A."/>
            <person name="Ehrlich S.D."/>
            <person name="Emmerson P.T."/>
            <person name="Entian K.-D."/>
            <person name="Errington J."/>
            <person name="Fabret C."/>
            <person name="Ferrari E."/>
            <person name="Foulger D."/>
            <person name="Fritz C."/>
            <person name="Fujita M."/>
            <person name="Fujita Y."/>
            <person name="Fuma S."/>
            <person name="Galizzi A."/>
            <person name="Galleron N."/>
            <person name="Ghim S.-Y."/>
            <person name="Glaser P."/>
            <person name="Goffeau A."/>
            <person name="Golightly E.J."/>
            <person name="Grandi G."/>
            <person name="Guiseppi G."/>
            <person name="Guy B.J."/>
            <person name="Haga K."/>
            <person name="Haiech J."/>
            <person name="Harwood C.R."/>
            <person name="Henaut A."/>
            <person name="Hilbert H."/>
            <person name="Holsappel S."/>
            <person name="Hosono S."/>
            <person name="Hullo M.-F."/>
            <person name="Itaya M."/>
            <person name="Jones L.-M."/>
            <person name="Joris B."/>
            <person name="Karamata D."/>
            <person name="Kasahara Y."/>
            <person name="Klaerr-Blanchard M."/>
            <person name="Klein C."/>
            <person name="Kobayashi Y."/>
            <person name="Koetter P."/>
            <person name="Koningstein G."/>
            <person name="Krogh S."/>
            <person name="Kumano M."/>
            <person name="Kurita K."/>
            <person name="Lapidus A."/>
            <person name="Lardinois S."/>
            <person name="Lauber J."/>
            <person name="Lazarevic V."/>
            <person name="Lee S.-M."/>
            <person name="Levine A."/>
            <person name="Liu H."/>
            <person name="Masuda S."/>
            <person name="Mauel C."/>
            <person name="Medigue C."/>
            <person name="Medina N."/>
            <person name="Mellado R.P."/>
            <person name="Mizuno M."/>
            <person name="Moestl D."/>
            <person name="Nakai S."/>
            <person name="Noback M."/>
            <person name="Noone D."/>
            <person name="O'Reilly M."/>
            <person name="Ogawa K."/>
            <person name="Ogiwara A."/>
            <person name="Oudega B."/>
            <person name="Park S.-H."/>
            <person name="Parro V."/>
            <person name="Pohl T.M."/>
            <person name="Portetelle D."/>
            <person name="Porwollik S."/>
            <person name="Prescott A.M."/>
            <person name="Presecan E."/>
            <person name="Pujic P."/>
            <person name="Purnelle B."/>
            <person name="Rapoport G."/>
            <person name="Rey M."/>
            <person name="Reynolds S."/>
            <person name="Rieger M."/>
            <person name="Rivolta C."/>
            <person name="Rocha E."/>
            <person name="Roche B."/>
            <person name="Rose M."/>
            <person name="Sadaie Y."/>
            <person name="Sato T."/>
            <person name="Scanlan E."/>
            <person name="Schleich S."/>
            <person name="Schroeter R."/>
            <person name="Scoffone F."/>
            <person name="Sekiguchi J."/>
            <person name="Sekowska A."/>
            <person name="Seror S.J."/>
            <person name="Serror P."/>
            <person name="Shin B.-S."/>
            <person name="Soldo B."/>
            <person name="Sorokin A."/>
            <person name="Tacconi E."/>
            <person name="Takagi T."/>
            <person name="Takahashi H."/>
            <person name="Takemaru K."/>
            <person name="Takeuchi M."/>
            <person name="Tamakoshi A."/>
            <person name="Tanaka T."/>
            <person name="Terpstra P."/>
            <person name="Tognoni A."/>
            <person name="Tosato V."/>
            <person name="Uchiyama S."/>
            <person name="Vandenbol M."/>
            <person name="Vannier F."/>
            <person name="Vassarotti A."/>
            <person name="Viari A."/>
            <person name="Wambutt R."/>
            <person name="Wedler E."/>
            <person name="Wedler H."/>
            <person name="Weitzenegger T."/>
            <person name="Winters P."/>
            <person name="Wipat A."/>
            <person name="Yamamoto H."/>
            <person name="Yamane K."/>
            <person name="Yasumoto K."/>
            <person name="Yata K."/>
            <person name="Yoshida K."/>
            <person name="Yoshikawa H.-F."/>
            <person name="Zumstein E."/>
            <person name="Yoshikawa H."/>
            <person name="Danchin A."/>
        </authorList>
    </citation>
    <scope>NUCLEOTIDE SEQUENCE [LARGE SCALE GENOMIC DNA]</scope>
    <source>
        <strain>168</strain>
    </source>
</reference>
<reference key="4">
    <citation type="journal article" date="2009" name="Microbiology">
        <title>From a consortium sequence to a unified sequence: the Bacillus subtilis 168 reference genome a decade later.</title>
        <authorList>
            <person name="Barbe V."/>
            <person name="Cruveiller S."/>
            <person name="Kunst F."/>
            <person name="Lenoble P."/>
            <person name="Meurice G."/>
            <person name="Sekowska A."/>
            <person name="Vallenet D."/>
            <person name="Wang T."/>
            <person name="Moszer I."/>
            <person name="Medigue C."/>
            <person name="Danchin A."/>
        </authorList>
    </citation>
    <scope>SEQUENCE REVISION TO 258</scope>
</reference>
<protein>
    <recommendedName>
        <fullName evidence="1">Transcription termination factor Rho</fullName>
        <ecNumber evidence="1">3.6.4.-</ecNumber>
    </recommendedName>
    <alternativeName>
        <fullName evidence="1">ATP-dependent helicase Rho</fullName>
    </alternativeName>
</protein>
<proteinExistence type="inferred from homology"/>
<accession>Q03222</accession>
<gene>
    <name evidence="1" type="primary">rho</name>
    <name type="ordered locus">BSU37080</name>
</gene>
<feature type="chain" id="PRO_0000188955" description="Transcription termination factor Rho">
    <location>
        <begin position="1"/>
        <end position="427"/>
    </location>
</feature>
<feature type="domain" description="Rho RNA-BD" evidence="2">
    <location>
        <begin position="51"/>
        <end position="125"/>
    </location>
</feature>
<feature type="binding site" evidence="1">
    <location>
        <begin position="168"/>
        <end position="173"/>
    </location>
    <ligand>
        <name>ATP</name>
        <dbReference type="ChEBI" id="CHEBI:30616"/>
    </ligand>
</feature>
<feature type="binding site" evidence="1">
    <location>
        <begin position="180"/>
        <end position="185"/>
    </location>
    <ligand>
        <name>ATP</name>
        <dbReference type="ChEBI" id="CHEBI:30616"/>
    </ligand>
</feature>
<feature type="binding site" evidence="1">
    <location>
        <position position="211"/>
    </location>
    <ligand>
        <name>ATP</name>
        <dbReference type="ChEBI" id="CHEBI:30616"/>
    </ligand>
</feature>
<feature type="sequence conflict" description="In Ref. 2; CAA89877." evidence="3" ref="2">
    <original>D</original>
    <variation>Y</variation>
    <location>
        <position position="258"/>
    </location>
</feature>
<dbReference type="EC" id="3.6.4.-" evidence="1"/>
<dbReference type="EMBL" id="M97678">
    <property type="protein sequence ID" value="AAA02900.1"/>
    <property type="molecule type" value="Unassigned_DNA"/>
</dbReference>
<dbReference type="EMBL" id="Z49782">
    <property type="protein sequence ID" value="CAA89877.1"/>
    <property type="molecule type" value="Genomic_DNA"/>
</dbReference>
<dbReference type="EMBL" id="AL009126">
    <property type="protein sequence ID" value="CAB15725.2"/>
    <property type="molecule type" value="Genomic_DNA"/>
</dbReference>
<dbReference type="PIR" id="A47051">
    <property type="entry name" value="A47051"/>
</dbReference>
<dbReference type="RefSeq" id="NP_391589.2">
    <property type="nucleotide sequence ID" value="NC_000964.3"/>
</dbReference>
<dbReference type="RefSeq" id="WP_003221939.1">
    <property type="nucleotide sequence ID" value="NZ_OZ025638.1"/>
</dbReference>
<dbReference type="SMR" id="Q03222"/>
<dbReference type="FunCoup" id="Q03222">
    <property type="interactions" value="394"/>
</dbReference>
<dbReference type="STRING" id="224308.BSU37080"/>
<dbReference type="jPOST" id="Q03222"/>
<dbReference type="PaxDb" id="224308-BSU37080"/>
<dbReference type="EnsemblBacteria" id="CAB15725">
    <property type="protein sequence ID" value="CAB15725"/>
    <property type="gene ID" value="BSU_37080"/>
</dbReference>
<dbReference type="GeneID" id="76980218"/>
<dbReference type="GeneID" id="937042"/>
<dbReference type="KEGG" id="bsu:BSU37080"/>
<dbReference type="PATRIC" id="fig|224308.179.peg.4016"/>
<dbReference type="eggNOG" id="COG1158">
    <property type="taxonomic scope" value="Bacteria"/>
</dbReference>
<dbReference type="InParanoid" id="Q03222"/>
<dbReference type="OrthoDB" id="9805197at2"/>
<dbReference type="PhylomeDB" id="Q03222"/>
<dbReference type="BioCyc" id="BSUB:BSU37080-MONOMER"/>
<dbReference type="PRO" id="PR:Q03222"/>
<dbReference type="Proteomes" id="UP000001570">
    <property type="component" value="Chromosome"/>
</dbReference>
<dbReference type="GO" id="GO:0005524">
    <property type="term" value="F:ATP binding"/>
    <property type="evidence" value="ECO:0007669"/>
    <property type="project" value="UniProtKB-UniRule"/>
</dbReference>
<dbReference type="GO" id="GO:0016887">
    <property type="term" value="F:ATP hydrolysis activity"/>
    <property type="evidence" value="ECO:0007669"/>
    <property type="project" value="InterPro"/>
</dbReference>
<dbReference type="GO" id="GO:0008186">
    <property type="term" value="F:ATP-dependent activity, acting on RNA"/>
    <property type="evidence" value="ECO:0007669"/>
    <property type="project" value="InterPro"/>
</dbReference>
<dbReference type="GO" id="GO:0004386">
    <property type="term" value="F:helicase activity"/>
    <property type="evidence" value="ECO:0007669"/>
    <property type="project" value="UniProtKB-UniRule"/>
</dbReference>
<dbReference type="GO" id="GO:0003723">
    <property type="term" value="F:RNA binding"/>
    <property type="evidence" value="ECO:0007669"/>
    <property type="project" value="UniProtKB-UniRule"/>
</dbReference>
<dbReference type="GO" id="GO:0006353">
    <property type="term" value="P:DNA-templated transcription termination"/>
    <property type="evidence" value="ECO:0000318"/>
    <property type="project" value="GO_Central"/>
</dbReference>
<dbReference type="CDD" id="cd04459">
    <property type="entry name" value="Rho_CSD"/>
    <property type="match status" value="1"/>
</dbReference>
<dbReference type="CDD" id="cd01128">
    <property type="entry name" value="rho_factor_C"/>
    <property type="match status" value="1"/>
</dbReference>
<dbReference type="FunFam" id="3.40.50.300:FF:000072">
    <property type="entry name" value="Transcription termination factor Rho"/>
    <property type="match status" value="1"/>
</dbReference>
<dbReference type="Gene3D" id="1.10.720.10">
    <property type="match status" value="1"/>
</dbReference>
<dbReference type="Gene3D" id="2.40.50.140">
    <property type="entry name" value="Nucleic acid-binding proteins"/>
    <property type="match status" value="1"/>
</dbReference>
<dbReference type="Gene3D" id="3.40.50.300">
    <property type="entry name" value="P-loop containing nucleotide triphosphate hydrolases"/>
    <property type="match status" value="1"/>
</dbReference>
<dbReference type="HAMAP" id="MF_01884">
    <property type="entry name" value="Rho"/>
    <property type="match status" value="1"/>
</dbReference>
<dbReference type="InterPro" id="IPR003593">
    <property type="entry name" value="AAA+_ATPase"/>
</dbReference>
<dbReference type="InterPro" id="IPR000194">
    <property type="entry name" value="ATPase_F1/V1/A1_a/bsu_nucl-bd"/>
</dbReference>
<dbReference type="InterPro" id="IPR011129">
    <property type="entry name" value="CSD"/>
</dbReference>
<dbReference type="InterPro" id="IPR012340">
    <property type="entry name" value="NA-bd_OB-fold"/>
</dbReference>
<dbReference type="InterPro" id="IPR027417">
    <property type="entry name" value="P-loop_NTPase"/>
</dbReference>
<dbReference type="InterPro" id="IPR011112">
    <property type="entry name" value="Rho-like_N"/>
</dbReference>
<dbReference type="InterPro" id="IPR041703">
    <property type="entry name" value="Rho_factor_ATP-bd"/>
</dbReference>
<dbReference type="InterPro" id="IPR036269">
    <property type="entry name" value="Rho_N_sf"/>
</dbReference>
<dbReference type="InterPro" id="IPR011113">
    <property type="entry name" value="Rho_RNA-bd"/>
</dbReference>
<dbReference type="InterPro" id="IPR004665">
    <property type="entry name" value="Term_rho"/>
</dbReference>
<dbReference type="NCBIfam" id="NF006886">
    <property type="entry name" value="PRK09376.1"/>
    <property type="match status" value="1"/>
</dbReference>
<dbReference type="NCBIfam" id="TIGR00767">
    <property type="entry name" value="rho"/>
    <property type="match status" value="1"/>
</dbReference>
<dbReference type="PANTHER" id="PTHR46425">
    <property type="entry name" value="TRANSCRIPTION TERMINATION FACTOR RHO"/>
    <property type="match status" value="1"/>
</dbReference>
<dbReference type="PANTHER" id="PTHR46425:SF1">
    <property type="entry name" value="TRANSCRIPTION TERMINATION FACTOR RHO"/>
    <property type="match status" value="1"/>
</dbReference>
<dbReference type="Pfam" id="PF00006">
    <property type="entry name" value="ATP-synt_ab"/>
    <property type="match status" value="1"/>
</dbReference>
<dbReference type="Pfam" id="PF07498">
    <property type="entry name" value="Rho_N"/>
    <property type="match status" value="1"/>
</dbReference>
<dbReference type="Pfam" id="PF07497">
    <property type="entry name" value="Rho_RNA_bind"/>
    <property type="match status" value="1"/>
</dbReference>
<dbReference type="SMART" id="SM00382">
    <property type="entry name" value="AAA"/>
    <property type="match status" value="1"/>
</dbReference>
<dbReference type="SMART" id="SM00357">
    <property type="entry name" value="CSP"/>
    <property type="match status" value="1"/>
</dbReference>
<dbReference type="SMART" id="SM00959">
    <property type="entry name" value="Rho_N"/>
    <property type="match status" value="1"/>
</dbReference>
<dbReference type="SUPFAM" id="SSF50249">
    <property type="entry name" value="Nucleic acid-binding proteins"/>
    <property type="match status" value="1"/>
</dbReference>
<dbReference type="SUPFAM" id="SSF52540">
    <property type="entry name" value="P-loop containing nucleoside triphosphate hydrolases"/>
    <property type="match status" value="1"/>
</dbReference>
<dbReference type="SUPFAM" id="SSF68912">
    <property type="entry name" value="Rho N-terminal domain-like"/>
    <property type="match status" value="1"/>
</dbReference>
<dbReference type="PROSITE" id="PS51856">
    <property type="entry name" value="RHO_RNA_BD"/>
    <property type="match status" value="1"/>
</dbReference>
<comment type="function">
    <text evidence="1">Facilitates transcription termination by a mechanism that involves Rho binding to the nascent RNA, activation of Rho's RNA-dependent ATPase activity, and release of the mRNA from the DNA template.</text>
</comment>
<comment type="subunit">
    <text evidence="1">Homohexamer. The homohexamer assembles into an open ring structure.</text>
</comment>
<comment type="similarity">
    <text evidence="1">Belongs to the Rho family.</text>
</comment>
<name>RHO_BACSU</name>